<feature type="chain" id="PRO_0000224290" description="Adenylosuccinate synthetase">
    <location>
        <begin position="1"/>
        <end position="431"/>
    </location>
</feature>
<feature type="active site" description="Proton acceptor" evidence="1">
    <location>
        <position position="14"/>
    </location>
</feature>
<feature type="active site" description="Proton donor" evidence="1">
    <location>
        <position position="42"/>
    </location>
</feature>
<feature type="binding site" evidence="1">
    <location>
        <begin position="13"/>
        <end position="19"/>
    </location>
    <ligand>
        <name>GTP</name>
        <dbReference type="ChEBI" id="CHEBI:37565"/>
    </ligand>
</feature>
<feature type="binding site" description="in other chain" evidence="1">
    <location>
        <begin position="14"/>
        <end position="17"/>
    </location>
    <ligand>
        <name>IMP</name>
        <dbReference type="ChEBI" id="CHEBI:58053"/>
        <note>ligand shared between dimeric partners</note>
    </ligand>
</feature>
<feature type="binding site" evidence="1">
    <location>
        <position position="14"/>
    </location>
    <ligand>
        <name>Mg(2+)</name>
        <dbReference type="ChEBI" id="CHEBI:18420"/>
    </ligand>
</feature>
<feature type="binding site" description="in other chain" evidence="1">
    <location>
        <begin position="39"/>
        <end position="42"/>
    </location>
    <ligand>
        <name>IMP</name>
        <dbReference type="ChEBI" id="CHEBI:58053"/>
        <note>ligand shared between dimeric partners</note>
    </ligand>
</feature>
<feature type="binding site" evidence="1">
    <location>
        <begin position="41"/>
        <end position="43"/>
    </location>
    <ligand>
        <name>GTP</name>
        <dbReference type="ChEBI" id="CHEBI:37565"/>
    </ligand>
</feature>
<feature type="binding site" evidence="1">
    <location>
        <position position="41"/>
    </location>
    <ligand>
        <name>Mg(2+)</name>
        <dbReference type="ChEBI" id="CHEBI:18420"/>
    </ligand>
</feature>
<feature type="binding site" description="in other chain" evidence="1">
    <location>
        <position position="130"/>
    </location>
    <ligand>
        <name>IMP</name>
        <dbReference type="ChEBI" id="CHEBI:58053"/>
        <note>ligand shared between dimeric partners</note>
    </ligand>
</feature>
<feature type="binding site" evidence="1">
    <location>
        <position position="144"/>
    </location>
    <ligand>
        <name>IMP</name>
        <dbReference type="ChEBI" id="CHEBI:58053"/>
        <note>ligand shared between dimeric partners</note>
    </ligand>
</feature>
<feature type="binding site" description="in other chain" evidence="1">
    <location>
        <position position="225"/>
    </location>
    <ligand>
        <name>IMP</name>
        <dbReference type="ChEBI" id="CHEBI:58053"/>
        <note>ligand shared between dimeric partners</note>
    </ligand>
</feature>
<feature type="binding site" description="in other chain" evidence="1">
    <location>
        <position position="240"/>
    </location>
    <ligand>
        <name>IMP</name>
        <dbReference type="ChEBI" id="CHEBI:58053"/>
        <note>ligand shared between dimeric partners</note>
    </ligand>
</feature>
<feature type="binding site" evidence="1">
    <location>
        <begin position="300"/>
        <end position="306"/>
    </location>
    <ligand>
        <name>substrate</name>
    </ligand>
</feature>
<feature type="binding site" description="in other chain" evidence="1">
    <location>
        <position position="304"/>
    </location>
    <ligand>
        <name>IMP</name>
        <dbReference type="ChEBI" id="CHEBI:58053"/>
        <note>ligand shared between dimeric partners</note>
    </ligand>
</feature>
<feature type="binding site" evidence="1">
    <location>
        <position position="306"/>
    </location>
    <ligand>
        <name>GTP</name>
        <dbReference type="ChEBI" id="CHEBI:37565"/>
    </ligand>
</feature>
<feature type="binding site" evidence="1">
    <location>
        <begin position="332"/>
        <end position="334"/>
    </location>
    <ligand>
        <name>GTP</name>
        <dbReference type="ChEBI" id="CHEBI:37565"/>
    </ligand>
</feature>
<feature type="binding site" evidence="1">
    <location>
        <begin position="415"/>
        <end position="417"/>
    </location>
    <ligand>
        <name>GTP</name>
        <dbReference type="ChEBI" id="CHEBI:37565"/>
    </ligand>
</feature>
<reference key="1">
    <citation type="journal article" date="2004" name="Nat. Genet.">
        <title>Evidence in the Legionella pneumophila genome for exploitation of host cell functions and high genome plasticity.</title>
        <authorList>
            <person name="Cazalet C."/>
            <person name="Rusniok C."/>
            <person name="Brueggemann H."/>
            <person name="Zidane N."/>
            <person name="Magnier A."/>
            <person name="Ma L."/>
            <person name="Tichit M."/>
            <person name="Jarraud S."/>
            <person name="Bouchier C."/>
            <person name="Vandenesch F."/>
            <person name="Kunst F."/>
            <person name="Etienne J."/>
            <person name="Glaser P."/>
            <person name="Buchrieser C."/>
        </authorList>
    </citation>
    <scope>NUCLEOTIDE SEQUENCE [LARGE SCALE GENOMIC DNA]</scope>
    <source>
        <strain>Paris</strain>
    </source>
</reference>
<sequence>MGKNVVVLGTQWGDEGKGKIVDLLTQDAQVVVRYQGGHNAGHTLKINGVKTVLRLIPSGMLRPNVTCYIANGVVLSPQALLSEIKELEGNGVNVRERLRISLACPLILPYHIALDKARETHMGKSAIGTTGRGIGPAYEDKVARRALRVGDLFHRDRFANKLTELLDYHNFVLTQYFKQPAVDLESLLDESLQWAEELRPMVCDVSACLHEHRKQGENILFEGAQGVYLDIDHGTYPYVTSSNTCVGSVINGAGFGPRYIDYVLGITKAYTTRVGGGPFPTELLDDVGKRIAERGQEFGAVTGRPRRCGWFDAVLLKRSIELNSISGLCVTKLDVLDGLEVLRIAVAYKDRDGNILSRPPLAADDFDDLLPVYEELPGWQESTADVTVMSDLPANARAYLKRIEEILGIPIDLLSTGPERDSTITLRGPFL</sequence>
<proteinExistence type="inferred from homology"/>
<gene>
    <name evidence="1" type="primary">purA</name>
    <name type="ordered locus">lpp0550</name>
</gene>
<keyword id="KW-0963">Cytoplasm</keyword>
<keyword id="KW-0342">GTP-binding</keyword>
<keyword id="KW-0436">Ligase</keyword>
<keyword id="KW-0460">Magnesium</keyword>
<keyword id="KW-0479">Metal-binding</keyword>
<keyword id="KW-0547">Nucleotide-binding</keyword>
<keyword id="KW-0658">Purine biosynthesis</keyword>
<name>PURA_LEGPA</name>
<organism>
    <name type="scientific">Legionella pneumophila (strain Paris)</name>
    <dbReference type="NCBI Taxonomy" id="297246"/>
    <lineage>
        <taxon>Bacteria</taxon>
        <taxon>Pseudomonadati</taxon>
        <taxon>Pseudomonadota</taxon>
        <taxon>Gammaproteobacteria</taxon>
        <taxon>Legionellales</taxon>
        <taxon>Legionellaceae</taxon>
        <taxon>Legionella</taxon>
    </lineage>
</organism>
<evidence type="ECO:0000255" key="1">
    <source>
        <dbReference type="HAMAP-Rule" id="MF_00011"/>
    </source>
</evidence>
<comment type="function">
    <text evidence="1">Plays an important role in the de novo pathway of purine nucleotide biosynthesis. Catalyzes the first committed step in the biosynthesis of AMP from IMP.</text>
</comment>
<comment type="catalytic activity">
    <reaction evidence="1">
        <text>IMP + L-aspartate + GTP = N(6)-(1,2-dicarboxyethyl)-AMP + GDP + phosphate + 2 H(+)</text>
        <dbReference type="Rhea" id="RHEA:15753"/>
        <dbReference type="ChEBI" id="CHEBI:15378"/>
        <dbReference type="ChEBI" id="CHEBI:29991"/>
        <dbReference type="ChEBI" id="CHEBI:37565"/>
        <dbReference type="ChEBI" id="CHEBI:43474"/>
        <dbReference type="ChEBI" id="CHEBI:57567"/>
        <dbReference type="ChEBI" id="CHEBI:58053"/>
        <dbReference type="ChEBI" id="CHEBI:58189"/>
        <dbReference type="EC" id="6.3.4.4"/>
    </reaction>
</comment>
<comment type="cofactor">
    <cofactor evidence="1">
        <name>Mg(2+)</name>
        <dbReference type="ChEBI" id="CHEBI:18420"/>
    </cofactor>
    <text evidence="1">Binds 1 Mg(2+) ion per subunit.</text>
</comment>
<comment type="pathway">
    <text evidence="1">Purine metabolism; AMP biosynthesis via de novo pathway; AMP from IMP: step 1/2.</text>
</comment>
<comment type="subunit">
    <text evidence="1">Homodimer.</text>
</comment>
<comment type="subcellular location">
    <subcellularLocation>
        <location evidence="1">Cytoplasm</location>
    </subcellularLocation>
</comment>
<comment type="similarity">
    <text evidence="1">Belongs to the adenylosuccinate synthetase family.</text>
</comment>
<accession>Q5X7Q5</accession>
<protein>
    <recommendedName>
        <fullName evidence="1">Adenylosuccinate synthetase</fullName>
        <shortName evidence="1">AMPSase</shortName>
        <shortName evidence="1">AdSS</shortName>
        <ecNumber evidence="1">6.3.4.4</ecNumber>
    </recommendedName>
    <alternativeName>
        <fullName evidence="1">IMP--aspartate ligase</fullName>
    </alternativeName>
</protein>
<dbReference type="EC" id="6.3.4.4" evidence="1"/>
<dbReference type="EMBL" id="CR628336">
    <property type="protein sequence ID" value="CAH11698.1"/>
    <property type="molecule type" value="Genomic_DNA"/>
</dbReference>
<dbReference type="RefSeq" id="WP_011213117.1">
    <property type="nucleotide sequence ID" value="NC_006368.1"/>
</dbReference>
<dbReference type="SMR" id="Q5X7Q5"/>
<dbReference type="KEGG" id="lpp:lpp0550"/>
<dbReference type="LegioList" id="lpp0550"/>
<dbReference type="HOGENOM" id="CLU_029848_0_0_6"/>
<dbReference type="UniPathway" id="UPA00075">
    <property type="reaction ID" value="UER00335"/>
</dbReference>
<dbReference type="GO" id="GO:0005737">
    <property type="term" value="C:cytoplasm"/>
    <property type="evidence" value="ECO:0007669"/>
    <property type="project" value="UniProtKB-SubCell"/>
</dbReference>
<dbReference type="GO" id="GO:0004019">
    <property type="term" value="F:adenylosuccinate synthase activity"/>
    <property type="evidence" value="ECO:0007669"/>
    <property type="project" value="UniProtKB-UniRule"/>
</dbReference>
<dbReference type="GO" id="GO:0005525">
    <property type="term" value="F:GTP binding"/>
    <property type="evidence" value="ECO:0007669"/>
    <property type="project" value="UniProtKB-UniRule"/>
</dbReference>
<dbReference type="GO" id="GO:0000287">
    <property type="term" value="F:magnesium ion binding"/>
    <property type="evidence" value="ECO:0007669"/>
    <property type="project" value="UniProtKB-UniRule"/>
</dbReference>
<dbReference type="GO" id="GO:0044208">
    <property type="term" value="P:'de novo' AMP biosynthetic process"/>
    <property type="evidence" value="ECO:0007669"/>
    <property type="project" value="UniProtKB-UniRule"/>
</dbReference>
<dbReference type="GO" id="GO:0046040">
    <property type="term" value="P:IMP metabolic process"/>
    <property type="evidence" value="ECO:0007669"/>
    <property type="project" value="TreeGrafter"/>
</dbReference>
<dbReference type="CDD" id="cd03108">
    <property type="entry name" value="AdSS"/>
    <property type="match status" value="1"/>
</dbReference>
<dbReference type="FunFam" id="1.10.300.10:FF:000001">
    <property type="entry name" value="Adenylosuccinate synthetase"/>
    <property type="match status" value="1"/>
</dbReference>
<dbReference type="FunFam" id="3.90.170.10:FF:000001">
    <property type="entry name" value="Adenylosuccinate synthetase"/>
    <property type="match status" value="1"/>
</dbReference>
<dbReference type="Gene3D" id="3.40.440.10">
    <property type="entry name" value="Adenylosuccinate Synthetase, subunit A, domain 1"/>
    <property type="match status" value="1"/>
</dbReference>
<dbReference type="Gene3D" id="1.10.300.10">
    <property type="entry name" value="Adenylosuccinate Synthetase, subunit A, domain 2"/>
    <property type="match status" value="1"/>
</dbReference>
<dbReference type="Gene3D" id="3.90.170.10">
    <property type="entry name" value="Adenylosuccinate Synthetase, subunit A, domain 3"/>
    <property type="match status" value="1"/>
</dbReference>
<dbReference type="HAMAP" id="MF_00011">
    <property type="entry name" value="Adenylosucc_synth"/>
    <property type="match status" value="1"/>
</dbReference>
<dbReference type="InterPro" id="IPR018220">
    <property type="entry name" value="Adenylosuccin_syn_GTP-bd"/>
</dbReference>
<dbReference type="InterPro" id="IPR033128">
    <property type="entry name" value="Adenylosuccin_syn_Lys_AS"/>
</dbReference>
<dbReference type="InterPro" id="IPR042109">
    <property type="entry name" value="Adenylosuccinate_synth_dom1"/>
</dbReference>
<dbReference type="InterPro" id="IPR042110">
    <property type="entry name" value="Adenylosuccinate_synth_dom2"/>
</dbReference>
<dbReference type="InterPro" id="IPR042111">
    <property type="entry name" value="Adenylosuccinate_synth_dom3"/>
</dbReference>
<dbReference type="InterPro" id="IPR001114">
    <property type="entry name" value="Adenylosuccinate_synthetase"/>
</dbReference>
<dbReference type="InterPro" id="IPR027417">
    <property type="entry name" value="P-loop_NTPase"/>
</dbReference>
<dbReference type="NCBIfam" id="NF002223">
    <property type="entry name" value="PRK01117.1"/>
    <property type="match status" value="1"/>
</dbReference>
<dbReference type="NCBIfam" id="TIGR00184">
    <property type="entry name" value="purA"/>
    <property type="match status" value="1"/>
</dbReference>
<dbReference type="PANTHER" id="PTHR11846">
    <property type="entry name" value="ADENYLOSUCCINATE SYNTHETASE"/>
    <property type="match status" value="1"/>
</dbReference>
<dbReference type="PANTHER" id="PTHR11846:SF0">
    <property type="entry name" value="ADENYLOSUCCINATE SYNTHETASE"/>
    <property type="match status" value="1"/>
</dbReference>
<dbReference type="Pfam" id="PF00709">
    <property type="entry name" value="Adenylsucc_synt"/>
    <property type="match status" value="1"/>
</dbReference>
<dbReference type="SMART" id="SM00788">
    <property type="entry name" value="Adenylsucc_synt"/>
    <property type="match status" value="1"/>
</dbReference>
<dbReference type="SUPFAM" id="SSF52540">
    <property type="entry name" value="P-loop containing nucleoside triphosphate hydrolases"/>
    <property type="match status" value="1"/>
</dbReference>
<dbReference type="PROSITE" id="PS01266">
    <property type="entry name" value="ADENYLOSUCCIN_SYN_1"/>
    <property type="match status" value="1"/>
</dbReference>
<dbReference type="PROSITE" id="PS00513">
    <property type="entry name" value="ADENYLOSUCCIN_SYN_2"/>
    <property type="match status" value="1"/>
</dbReference>